<accession>Q65V70</accession>
<organism>
    <name type="scientific">Mannheimia succiniciproducens (strain KCTC 0769BP / MBEL55E)</name>
    <dbReference type="NCBI Taxonomy" id="221988"/>
    <lineage>
        <taxon>Bacteria</taxon>
        <taxon>Pseudomonadati</taxon>
        <taxon>Pseudomonadota</taxon>
        <taxon>Gammaproteobacteria</taxon>
        <taxon>Pasteurellales</taxon>
        <taxon>Pasteurellaceae</taxon>
        <taxon>Basfia</taxon>
    </lineage>
</organism>
<keyword id="KW-0963">Cytoplasm</keyword>
<keyword id="KW-0489">Methyltransferase</keyword>
<keyword id="KW-0949">S-adenosyl-L-methionine</keyword>
<keyword id="KW-0808">Transferase</keyword>
<name>PRMA_MANSM</name>
<protein>
    <recommendedName>
        <fullName evidence="1">Ribosomal protein L11 methyltransferase</fullName>
        <shortName evidence="1">L11 Mtase</shortName>
        <ecNumber evidence="1">2.1.1.-</ecNumber>
    </recommendedName>
</protein>
<feature type="chain" id="PRO_0000192280" description="Ribosomal protein L11 methyltransferase">
    <location>
        <begin position="1"/>
        <end position="293"/>
    </location>
</feature>
<feature type="binding site" evidence="1">
    <location>
        <position position="145"/>
    </location>
    <ligand>
        <name>S-adenosyl-L-methionine</name>
        <dbReference type="ChEBI" id="CHEBI:59789"/>
    </ligand>
</feature>
<feature type="binding site" evidence="1">
    <location>
        <position position="166"/>
    </location>
    <ligand>
        <name>S-adenosyl-L-methionine</name>
        <dbReference type="ChEBI" id="CHEBI:59789"/>
    </ligand>
</feature>
<feature type="binding site" evidence="1">
    <location>
        <position position="188"/>
    </location>
    <ligand>
        <name>S-adenosyl-L-methionine</name>
        <dbReference type="ChEBI" id="CHEBI:59789"/>
    </ligand>
</feature>
<feature type="binding site" evidence="1">
    <location>
        <position position="230"/>
    </location>
    <ligand>
        <name>S-adenosyl-L-methionine</name>
        <dbReference type="ChEBI" id="CHEBI:59789"/>
    </ligand>
</feature>
<sequence>MAWVQIRLNSTNEKAETISDYLEEIGSVSVTFMDSQDTPIFEPLPGETRLWGNTDVIALFDAETDMQQIVRLLRQEGHLDENTAYKIEQIEDKDWEREWMDNFHPMQFGKRLWICPSWREVPDPNAVNVMLDPGLAFGTGTHPTTALCLEWLDGLDLAGKTVIDFGCGSGILAIAALKLGAKEAIGIDIDPQAILASRNNAEQNGVADRLKLYLSEDKPANMKAEVVVANILAGPLKELYPVISELVKEKGNLGLSGILATQAESVCEAYQAKFDLDAVVEREEWCRITGKLK</sequence>
<dbReference type="EC" id="2.1.1.-" evidence="1"/>
<dbReference type="EMBL" id="AE016827">
    <property type="protein sequence ID" value="AAU37140.1"/>
    <property type="molecule type" value="Genomic_DNA"/>
</dbReference>
<dbReference type="RefSeq" id="WP_011199712.1">
    <property type="nucleotide sequence ID" value="NC_006300.1"/>
</dbReference>
<dbReference type="SMR" id="Q65V70"/>
<dbReference type="STRING" id="221988.MS0533"/>
<dbReference type="KEGG" id="msu:MS0533"/>
<dbReference type="eggNOG" id="COG2264">
    <property type="taxonomic scope" value="Bacteria"/>
</dbReference>
<dbReference type="HOGENOM" id="CLU_049382_4_1_6"/>
<dbReference type="OrthoDB" id="9785995at2"/>
<dbReference type="Proteomes" id="UP000000607">
    <property type="component" value="Chromosome"/>
</dbReference>
<dbReference type="GO" id="GO:0005829">
    <property type="term" value="C:cytosol"/>
    <property type="evidence" value="ECO:0007669"/>
    <property type="project" value="TreeGrafter"/>
</dbReference>
<dbReference type="GO" id="GO:0016279">
    <property type="term" value="F:protein-lysine N-methyltransferase activity"/>
    <property type="evidence" value="ECO:0007669"/>
    <property type="project" value="TreeGrafter"/>
</dbReference>
<dbReference type="GO" id="GO:0032259">
    <property type="term" value="P:methylation"/>
    <property type="evidence" value="ECO:0007669"/>
    <property type="project" value="UniProtKB-KW"/>
</dbReference>
<dbReference type="CDD" id="cd02440">
    <property type="entry name" value="AdoMet_MTases"/>
    <property type="match status" value="1"/>
</dbReference>
<dbReference type="Gene3D" id="3.40.50.150">
    <property type="entry name" value="Vaccinia Virus protein VP39"/>
    <property type="match status" value="1"/>
</dbReference>
<dbReference type="HAMAP" id="MF_00735">
    <property type="entry name" value="Methyltr_PrmA"/>
    <property type="match status" value="1"/>
</dbReference>
<dbReference type="InterPro" id="IPR050078">
    <property type="entry name" value="Ribosomal_L11_MeTrfase_PrmA"/>
</dbReference>
<dbReference type="InterPro" id="IPR004498">
    <property type="entry name" value="Ribosomal_PrmA_MeTrfase"/>
</dbReference>
<dbReference type="InterPro" id="IPR029063">
    <property type="entry name" value="SAM-dependent_MTases_sf"/>
</dbReference>
<dbReference type="NCBIfam" id="TIGR00406">
    <property type="entry name" value="prmA"/>
    <property type="match status" value="1"/>
</dbReference>
<dbReference type="PANTHER" id="PTHR43648">
    <property type="entry name" value="ELECTRON TRANSFER FLAVOPROTEIN BETA SUBUNIT LYSINE METHYLTRANSFERASE"/>
    <property type="match status" value="1"/>
</dbReference>
<dbReference type="PANTHER" id="PTHR43648:SF1">
    <property type="entry name" value="ELECTRON TRANSFER FLAVOPROTEIN BETA SUBUNIT LYSINE METHYLTRANSFERASE"/>
    <property type="match status" value="1"/>
</dbReference>
<dbReference type="Pfam" id="PF06325">
    <property type="entry name" value="PrmA"/>
    <property type="match status" value="1"/>
</dbReference>
<dbReference type="PIRSF" id="PIRSF000401">
    <property type="entry name" value="RPL11_MTase"/>
    <property type="match status" value="1"/>
</dbReference>
<dbReference type="SUPFAM" id="SSF53335">
    <property type="entry name" value="S-adenosyl-L-methionine-dependent methyltransferases"/>
    <property type="match status" value="1"/>
</dbReference>
<evidence type="ECO:0000255" key="1">
    <source>
        <dbReference type="HAMAP-Rule" id="MF_00735"/>
    </source>
</evidence>
<proteinExistence type="inferred from homology"/>
<gene>
    <name evidence="1" type="primary">prmA</name>
    <name type="ordered locus">MS0533</name>
</gene>
<comment type="function">
    <text evidence="1">Methylates ribosomal protein L11.</text>
</comment>
<comment type="catalytic activity">
    <reaction evidence="1">
        <text>L-lysyl-[protein] + 3 S-adenosyl-L-methionine = N(6),N(6),N(6)-trimethyl-L-lysyl-[protein] + 3 S-adenosyl-L-homocysteine + 3 H(+)</text>
        <dbReference type="Rhea" id="RHEA:54192"/>
        <dbReference type="Rhea" id="RHEA-COMP:9752"/>
        <dbReference type="Rhea" id="RHEA-COMP:13826"/>
        <dbReference type="ChEBI" id="CHEBI:15378"/>
        <dbReference type="ChEBI" id="CHEBI:29969"/>
        <dbReference type="ChEBI" id="CHEBI:57856"/>
        <dbReference type="ChEBI" id="CHEBI:59789"/>
        <dbReference type="ChEBI" id="CHEBI:61961"/>
    </reaction>
</comment>
<comment type="subcellular location">
    <subcellularLocation>
        <location evidence="1">Cytoplasm</location>
    </subcellularLocation>
</comment>
<comment type="similarity">
    <text evidence="1">Belongs to the methyltransferase superfamily. PrmA family.</text>
</comment>
<reference key="1">
    <citation type="journal article" date="2004" name="Nat. Biotechnol.">
        <title>The genome sequence of the capnophilic rumen bacterium Mannheimia succiniciproducens.</title>
        <authorList>
            <person name="Hong S.H."/>
            <person name="Kim J.S."/>
            <person name="Lee S.Y."/>
            <person name="In Y.H."/>
            <person name="Choi S.S."/>
            <person name="Rih J.-K."/>
            <person name="Kim C.H."/>
            <person name="Jeong H."/>
            <person name="Hur C.G."/>
            <person name="Kim J.J."/>
        </authorList>
    </citation>
    <scope>NUCLEOTIDE SEQUENCE [LARGE SCALE GENOMIC DNA]</scope>
    <source>
        <strain>KCTC 0769BP / MBEL55E</strain>
    </source>
</reference>